<evidence type="ECO:0000255" key="1">
    <source>
        <dbReference type="HAMAP-Rule" id="MF_00154"/>
    </source>
</evidence>
<protein>
    <recommendedName>
        <fullName evidence="1">Protoheme IX farnesyltransferase 2</fullName>
        <ecNumber evidence="1">2.5.1.141</ecNumber>
    </recommendedName>
    <alternativeName>
        <fullName evidence="1">Heme B farnesyltransferase 2</fullName>
    </alternativeName>
    <alternativeName>
        <fullName evidence="1">Heme O synthase 2</fullName>
    </alternativeName>
</protein>
<proteinExistence type="inferred from homology"/>
<reference key="1">
    <citation type="journal article" date="2003" name="Proc. Natl. Acad. Sci. U.S.A.">
        <title>The complete genome sequence of Chromobacterium violaceum reveals remarkable and exploitable bacterial adaptability.</title>
        <authorList>
            <person name="Vasconcelos A.T.R."/>
            <person name="de Almeida D.F."/>
            <person name="Hungria M."/>
            <person name="Guimaraes C.T."/>
            <person name="Antonio R.V."/>
            <person name="Almeida F.C."/>
            <person name="de Almeida L.G.P."/>
            <person name="de Almeida R."/>
            <person name="Alves-Gomes J.A."/>
            <person name="Andrade E.M."/>
            <person name="Araripe J."/>
            <person name="de Araujo M.F.F."/>
            <person name="Astolfi-Filho S."/>
            <person name="Azevedo V."/>
            <person name="Baptista A.J."/>
            <person name="Bataus L.A.M."/>
            <person name="Batista J.S."/>
            <person name="Belo A."/>
            <person name="van den Berg C."/>
            <person name="Bogo M."/>
            <person name="Bonatto S."/>
            <person name="Bordignon J."/>
            <person name="Brigido M.M."/>
            <person name="Brito C.A."/>
            <person name="Brocchi M."/>
            <person name="Burity H.A."/>
            <person name="Camargo A.A."/>
            <person name="Cardoso D.D.P."/>
            <person name="Carneiro N.P."/>
            <person name="Carraro D.M."/>
            <person name="Carvalho C.M.B."/>
            <person name="Cascardo J.C.M."/>
            <person name="Cavada B.S."/>
            <person name="Chueire L.M.O."/>
            <person name="Creczynski-Pasa T.B."/>
            <person name="Cunha-Junior N.C."/>
            <person name="Fagundes N."/>
            <person name="Falcao C.L."/>
            <person name="Fantinatti F."/>
            <person name="Farias I.P."/>
            <person name="Felipe M.S.S."/>
            <person name="Ferrari L.P."/>
            <person name="Ferro J.A."/>
            <person name="Ferro M.I.T."/>
            <person name="Franco G.R."/>
            <person name="Freitas N.S.A."/>
            <person name="Furlan L.R."/>
            <person name="Gazzinelli R.T."/>
            <person name="Gomes E.A."/>
            <person name="Goncalves P.R."/>
            <person name="Grangeiro T.B."/>
            <person name="Grattapaglia D."/>
            <person name="Grisard E.C."/>
            <person name="Hanna E.S."/>
            <person name="Jardim S.N."/>
            <person name="Laurino J."/>
            <person name="Leoi L.C.T."/>
            <person name="Lima L.F.A."/>
            <person name="Loureiro M.F."/>
            <person name="Lyra M.C.C.P."/>
            <person name="Madeira H.M.F."/>
            <person name="Manfio G.P."/>
            <person name="Maranhao A.Q."/>
            <person name="Martins W.S."/>
            <person name="di Mauro S.M.Z."/>
            <person name="de Medeiros S.R.B."/>
            <person name="Meissner R.V."/>
            <person name="Moreira M.A.M."/>
            <person name="Nascimento F.F."/>
            <person name="Nicolas M.F."/>
            <person name="Oliveira J.G."/>
            <person name="Oliveira S.C."/>
            <person name="Paixao R.F.C."/>
            <person name="Parente J.A."/>
            <person name="Pedrosa F.O."/>
            <person name="Pena S.D.J."/>
            <person name="Pereira J.O."/>
            <person name="Pereira M."/>
            <person name="Pinto L.S.R.C."/>
            <person name="Pinto L.S."/>
            <person name="Porto J.I.R."/>
            <person name="Potrich D.P."/>
            <person name="Ramalho-Neto C.E."/>
            <person name="Reis A.M.M."/>
            <person name="Rigo L.U."/>
            <person name="Rondinelli E."/>
            <person name="Santos E.B.P."/>
            <person name="Santos F.R."/>
            <person name="Schneider M.P.C."/>
            <person name="Seuanez H.N."/>
            <person name="Silva A.M.R."/>
            <person name="da Silva A.L.C."/>
            <person name="Silva D.W."/>
            <person name="Silva R."/>
            <person name="Simoes I.C."/>
            <person name="Simon D."/>
            <person name="Soares C.M.A."/>
            <person name="Soares R.B.A."/>
            <person name="Souza E.M."/>
            <person name="Souza K.R.L."/>
            <person name="Souza R.C."/>
            <person name="Steffens M.B.R."/>
            <person name="Steindel M."/>
            <person name="Teixeira S.R."/>
            <person name="Urmenyi T."/>
            <person name="Vettore A."/>
            <person name="Wassem R."/>
            <person name="Zaha A."/>
            <person name="Simpson A.J.G."/>
        </authorList>
    </citation>
    <scope>NUCLEOTIDE SEQUENCE [LARGE SCALE GENOMIC DNA]</scope>
    <source>
        <strain>ATCC 12472 / DSM 30191 / JCM 1249 / CCUG 213 / NBRC 12614 / NCIMB 9131 / NCTC 9757 / MK</strain>
    </source>
</reference>
<organism>
    <name type="scientific">Chromobacterium violaceum (strain ATCC 12472 / DSM 30191 / JCM 1249 / CCUG 213 / NBRC 12614 / NCIMB 9131 / NCTC 9757 / MK)</name>
    <dbReference type="NCBI Taxonomy" id="243365"/>
    <lineage>
        <taxon>Bacteria</taxon>
        <taxon>Pseudomonadati</taxon>
        <taxon>Pseudomonadota</taxon>
        <taxon>Betaproteobacteria</taxon>
        <taxon>Neisseriales</taxon>
        <taxon>Chromobacteriaceae</taxon>
        <taxon>Chromobacterium</taxon>
    </lineage>
</organism>
<feature type="chain" id="PRO_0000327038" description="Protoheme IX farnesyltransferase 2">
    <location>
        <begin position="1"/>
        <end position="302"/>
    </location>
</feature>
<feature type="transmembrane region" description="Helical" evidence="1">
    <location>
        <begin position="14"/>
        <end position="34"/>
    </location>
</feature>
<feature type="transmembrane region" description="Helical" evidence="1">
    <location>
        <begin position="36"/>
        <end position="56"/>
    </location>
</feature>
<feature type="transmembrane region" description="Helical" evidence="1">
    <location>
        <begin position="85"/>
        <end position="105"/>
    </location>
</feature>
<feature type="transmembrane region" description="Helical" evidence="1">
    <location>
        <begin position="108"/>
        <end position="128"/>
    </location>
</feature>
<feature type="transmembrane region" description="Helical" evidence="1">
    <location>
        <begin position="133"/>
        <end position="153"/>
    </location>
</feature>
<feature type="transmembrane region" description="Helical" evidence="1">
    <location>
        <begin position="163"/>
        <end position="183"/>
    </location>
</feature>
<feature type="transmembrane region" description="Helical" evidence="1">
    <location>
        <begin position="209"/>
        <end position="229"/>
    </location>
</feature>
<feature type="transmembrane region" description="Helical" evidence="1">
    <location>
        <begin position="230"/>
        <end position="250"/>
    </location>
</feature>
<feature type="transmembrane region" description="Helical" evidence="1">
    <location>
        <begin position="264"/>
        <end position="284"/>
    </location>
</feature>
<keyword id="KW-0997">Cell inner membrane</keyword>
<keyword id="KW-1003">Cell membrane</keyword>
<keyword id="KW-0350">Heme biosynthesis</keyword>
<keyword id="KW-0472">Membrane</keyword>
<keyword id="KW-1185">Reference proteome</keyword>
<keyword id="KW-0808">Transferase</keyword>
<keyword id="KW-0812">Transmembrane</keyword>
<keyword id="KW-1133">Transmembrane helix</keyword>
<name>COXX2_CHRVO</name>
<gene>
    <name evidence="1" type="primary">ctaB2</name>
    <name type="ordered locus">CV_3992</name>
</gene>
<comment type="function">
    <text evidence="1">Converts heme B (protoheme IX) to heme O by substitution of the vinyl group on carbon 2 of heme B porphyrin ring with a hydroxyethyl farnesyl side group.</text>
</comment>
<comment type="catalytic activity">
    <reaction evidence="1">
        <text>heme b + (2E,6E)-farnesyl diphosphate + H2O = Fe(II)-heme o + diphosphate</text>
        <dbReference type="Rhea" id="RHEA:28070"/>
        <dbReference type="ChEBI" id="CHEBI:15377"/>
        <dbReference type="ChEBI" id="CHEBI:33019"/>
        <dbReference type="ChEBI" id="CHEBI:60344"/>
        <dbReference type="ChEBI" id="CHEBI:60530"/>
        <dbReference type="ChEBI" id="CHEBI:175763"/>
        <dbReference type="EC" id="2.5.1.141"/>
    </reaction>
</comment>
<comment type="pathway">
    <text evidence="1">Porphyrin-containing compound metabolism; heme O biosynthesis; heme O from protoheme: step 1/1.</text>
</comment>
<comment type="subcellular location">
    <subcellularLocation>
        <location evidence="1">Cell inner membrane</location>
        <topology evidence="1">Multi-pass membrane protein</topology>
    </subcellularLocation>
</comment>
<comment type="miscellaneous">
    <text evidence="1">Carbon 2 of the heme B porphyrin ring is defined according to the Fischer nomenclature.</text>
</comment>
<comment type="similarity">
    <text evidence="1">Belongs to the UbiA prenyltransferase family. Protoheme IX farnesyltransferase subfamily.</text>
</comment>
<dbReference type="EC" id="2.5.1.141" evidence="1"/>
<dbReference type="EMBL" id="AE016825">
    <property type="protein sequence ID" value="AAQ61654.1"/>
    <property type="molecule type" value="Genomic_DNA"/>
</dbReference>
<dbReference type="RefSeq" id="WP_011137539.1">
    <property type="nucleotide sequence ID" value="NC_005085.1"/>
</dbReference>
<dbReference type="SMR" id="Q7NQZ3"/>
<dbReference type="STRING" id="243365.CV_3992"/>
<dbReference type="KEGG" id="cvi:CV_3992"/>
<dbReference type="eggNOG" id="COG0109">
    <property type="taxonomic scope" value="Bacteria"/>
</dbReference>
<dbReference type="HOGENOM" id="CLU_029631_0_0_4"/>
<dbReference type="OrthoDB" id="9814417at2"/>
<dbReference type="UniPathway" id="UPA00834">
    <property type="reaction ID" value="UER00712"/>
</dbReference>
<dbReference type="Proteomes" id="UP000001424">
    <property type="component" value="Chromosome"/>
</dbReference>
<dbReference type="GO" id="GO:0005886">
    <property type="term" value="C:plasma membrane"/>
    <property type="evidence" value="ECO:0007669"/>
    <property type="project" value="UniProtKB-SubCell"/>
</dbReference>
<dbReference type="GO" id="GO:0008495">
    <property type="term" value="F:protoheme IX farnesyltransferase activity"/>
    <property type="evidence" value="ECO:0007669"/>
    <property type="project" value="UniProtKB-UniRule"/>
</dbReference>
<dbReference type="GO" id="GO:0048034">
    <property type="term" value="P:heme O biosynthetic process"/>
    <property type="evidence" value="ECO:0007669"/>
    <property type="project" value="UniProtKB-UniRule"/>
</dbReference>
<dbReference type="CDD" id="cd13957">
    <property type="entry name" value="PT_UbiA_Cox10"/>
    <property type="match status" value="1"/>
</dbReference>
<dbReference type="FunFam" id="1.10.357.140:FF:000001">
    <property type="entry name" value="Protoheme IX farnesyltransferase"/>
    <property type="match status" value="1"/>
</dbReference>
<dbReference type="Gene3D" id="1.10.357.140">
    <property type="entry name" value="UbiA prenyltransferase"/>
    <property type="match status" value="1"/>
</dbReference>
<dbReference type="HAMAP" id="MF_00154">
    <property type="entry name" value="CyoE_CtaB"/>
    <property type="match status" value="1"/>
</dbReference>
<dbReference type="InterPro" id="IPR006369">
    <property type="entry name" value="Protohaem_IX_farnesylTrfase"/>
</dbReference>
<dbReference type="InterPro" id="IPR000537">
    <property type="entry name" value="UbiA_prenyltransferase"/>
</dbReference>
<dbReference type="InterPro" id="IPR030470">
    <property type="entry name" value="UbiA_prenylTrfase_CS"/>
</dbReference>
<dbReference type="InterPro" id="IPR044878">
    <property type="entry name" value="UbiA_sf"/>
</dbReference>
<dbReference type="NCBIfam" id="TIGR01473">
    <property type="entry name" value="cyoE_ctaB"/>
    <property type="match status" value="1"/>
</dbReference>
<dbReference type="NCBIfam" id="NF003348">
    <property type="entry name" value="PRK04375.1-1"/>
    <property type="match status" value="1"/>
</dbReference>
<dbReference type="PANTHER" id="PTHR43448">
    <property type="entry name" value="PROTOHEME IX FARNESYLTRANSFERASE, MITOCHONDRIAL"/>
    <property type="match status" value="1"/>
</dbReference>
<dbReference type="PANTHER" id="PTHR43448:SF2">
    <property type="entry name" value="PROTOHEME IX FARNESYLTRANSFERASE, MITOCHONDRIAL"/>
    <property type="match status" value="1"/>
</dbReference>
<dbReference type="Pfam" id="PF01040">
    <property type="entry name" value="UbiA"/>
    <property type="match status" value="1"/>
</dbReference>
<dbReference type="PROSITE" id="PS00943">
    <property type="entry name" value="UBIA"/>
    <property type="match status" value="1"/>
</dbReference>
<sequence length="302" mass="32277">MKFKRYLQVTKPGIIFGNLISAAGGFLLAAQGSVDWWLLAATVVGLSLVVASGCAINNCIDQDIDAKMARTQKRVLVTGAMSTKAALAHGVVLGLAGFALLWFCTNPLATGCVLFGFVIYVGVYSLYMKRNSVYGTLVGSLSGAVPPVAGYCAVTGRFDMGAAILLLMFSLWQMPHSYAIAIFRFKDYEAAGIPVLPVVKGISAAKQQIVLYILAFAAATVMLVFGGYAGYGYLAVAVATSLWWLKMALSGYKRETDDRAWARQVFFFSIITITSLSVMMAVDGQTPPHSRAVMTADAGHYG</sequence>
<accession>Q7NQZ3</accession>